<gene>
    <name type="primary">mug179</name>
    <name type="synonym">atg18b</name>
    <name type="ORF">SPAC823.16c</name>
</gene>
<reference key="1">
    <citation type="journal article" date="2002" name="Nature">
        <title>The genome sequence of Schizosaccharomyces pombe.</title>
        <authorList>
            <person name="Wood V."/>
            <person name="Gwilliam R."/>
            <person name="Rajandream M.A."/>
            <person name="Lyne M.H."/>
            <person name="Lyne R."/>
            <person name="Stewart A."/>
            <person name="Sgouros J.G."/>
            <person name="Peat N."/>
            <person name="Hayles J."/>
            <person name="Baker S.G."/>
            <person name="Basham D."/>
            <person name="Bowman S."/>
            <person name="Brooks K."/>
            <person name="Brown D."/>
            <person name="Brown S."/>
            <person name="Chillingworth T."/>
            <person name="Churcher C.M."/>
            <person name="Collins M."/>
            <person name="Connor R."/>
            <person name="Cronin A."/>
            <person name="Davis P."/>
            <person name="Feltwell T."/>
            <person name="Fraser A."/>
            <person name="Gentles S."/>
            <person name="Goble A."/>
            <person name="Hamlin N."/>
            <person name="Harris D.E."/>
            <person name="Hidalgo J."/>
            <person name="Hodgson G."/>
            <person name="Holroyd S."/>
            <person name="Hornsby T."/>
            <person name="Howarth S."/>
            <person name="Huckle E.J."/>
            <person name="Hunt S."/>
            <person name="Jagels K."/>
            <person name="James K.D."/>
            <person name="Jones L."/>
            <person name="Jones M."/>
            <person name="Leather S."/>
            <person name="McDonald S."/>
            <person name="McLean J."/>
            <person name="Mooney P."/>
            <person name="Moule S."/>
            <person name="Mungall K.L."/>
            <person name="Murphy L.D."/>
            <person name="Niblett D."/>
            <person name="Odell C."/>
            <person name="Oliver K."/>
            <person name="O'Neil S."/>
            <person name="Pearson D."/>
            <person name="Quail M.A."/>
            <person name="Rabbinowitsch E."/>
            <person name="Rutherford K.M."/>
            <person name="Rutter S."/>
            <person name="Saunders D."/>
            <person name="Seeger K."/>
            <person name="Sharp S."/>
            <person name="Skelton J."/>
            <person name="Simmonds M.N."/>
            <person name="Squares R."/>
            <person name="Squares S."/>
            <person name="Stevens K."/>
            <person name="Taylor K."/>
            <person name="Taylor R.G."/>
            <person name="Tivey A."/>
            <person name="Walsh S.V."/>
            <person name="Warren T."/>
            <person name="Whitehead S."/>
            <person name="Woodward J.R."/>
            <person name="Volckaert G."/>
            <person name="Aert R."/>
            <person name="Robben J."/>
            <person name="Grymonprez B."/>
            <person name="Weltjens I."/>
            <person name="Vanstreels E."/>
            <person name="Rieger M."/>
            <person name="Schaefer M."/>
            <person name="Mueller-Auer S."/>
            <person name="Gabel C."/>
            <person name="Fuchs M."/>
            <person name="Duesterhoeft A."/>
            <person name="Fritzc C."/>
            <person name="Holzer E."/>
            <person name="Moestl D."/>
            <person name="Hilbert H."/>
            <person name="Borzym K."/>
            <person name="Langer I."/>
            <person name="Beck A."/>
            <person name="Lehrach H."/>
            <person name="Reinhardt R."/>
            <person name="Pohl T.M."/>
            <person name="Eger P."/>
            <person name="Zimmermann W."/>
            <person name="Wedler H."/>
            <person name="Wambutt R."/>
            <person name="Purnelle B."/>
            <person name="Goffeau A."/>
            <person name="Cadieu E."/>
            <person name="Dreano S."/>
            <person name="Gloux S."/>
            <person name="Lelaure V."/>
            <person name="Mottier S."/>
            <person name="Galibert F."/>
            <person name="Aves S.J."/>
            <person name="Xiang Z."/>
            <person name="Hunt C."/>
            <person name="Moore K."/>
            <person name="Hurst S.M."/>
            <person name="Lucas M."/>
            <person name="Rochet M."/>
            <person name="Gaillardin C."/>
            <person name="Tallada V.A."/>
            <person name="Garzon A."/>
            <person name="Thode G."/>
            <person name="Daga R.R."/>
            <person name="Cruzado L."/>
            <person name="Jimenez J."/>
            <person name="Sanchez M."/>
            <person name="del Rey F."/>
            <person name="Benito J."/>
            <person name="Dominguez A."/>
            <person name="Revuelta J.L."/>
            <person name="Moreno S."/>
            <person name="Armstrong J."/>
            <person name="Forsburg S.L."/>
            <person name="Cerutti L."/>
            <person name="Lowe T."/>
            <person name="McCombie W.R."/>
            <person name="Paulsen I."/>
            <person name="Potashkin J."/>
            <person name="Shpakovski G.V."/>
            <person name="Ussery D."/>
            <person name="Barrell B.G."/>
            <person name="Nurse P."/>
        </authorList>
    </citation>
    <scope>NUCLEOTIDE SEQUENCE [LARGE SCALE GENOMIC DNA]</scope>
    <source>
        <strain>972 / ATCC 24843</strain>
    </source>
</reference>
<reference key="2">
    <citation type="journal article" date="2005" name="Curr. Biol.">
        <title>A large-scale screen in S. pombe identifies seven novel genes required for critical meiotic events.</title>
        <authorList>
            <person name="Martin-Castellanos C."/>
            <person name="Blanco M."/>
            <person name="Rozalen A.E."/>
            <person name="Perez-Hidalgo L."/>
            <person name="Garcia A.I."/>
            <person name="Conde F."/>
            <person name="Mata J."/>
            <person name="Ellermeier C."/>
            <person name="Davis L."/>
            <person name="San-Segundo P."/>
            <person name="Smith G.R."/>
            <person name="Moreno S."/>
        </authorList>
    </citation>
    <scope>FUNCTION IN SPORULATION</scope>
</reference>
<reference key="3">
    <citation type="journal article" date="2006" name="Nat. Biotechnol.">
        <title>ORFeome cloning and global analysis of protein localization in the fission yeast Schizosaccharomyces pombe.</title>
        <authorList>
            <person name="Matsuyama A."/>
            <person name="Arai R."/>
            <person name="Yashiroda Y."/>
            <person name="Shirai A."/>
            <person name="Kamata A."/>
            <person name="Sekido S."/>
            <person name="Kobayashi Y."/>
            <person name="Hashimoto A."/>
            <person name="Hamamoto M."/>
            <person name="Hiraoka Y."/>
            <person name="Horinouchi S."/>
            <person name="Yoshida M."/>
        </authorList>
    </citation>
    <scope>SUBCELLULAR LOCATION [LARGE SCALE ANALYSIS]</scope>
</reference>
<reference key="4">
    <citation type="journal article" date="2013" name="PLoS Genet.">
        <title>Global analysis of fission yeast mating genes reveals new autophagy factors.</title>
        <authorList>
            <person name="Sun L.L."/>
            <person name="Li M."/>
            <person name="Suo F."/>
            <person name="Liu X.M."/>
            <person name="Shen E.Z."/>
            <person name="Yang B."/>
            <person name="Dong M.Q."/>
            <person name="He W.Z."/>
            <person name="Du L.L."/>
        </authorList>
    </citation>
    <scope>DISRUPTION PHENOTYPE</scope>
    <scope>SUBCELLULAR LOCATION</scope>
</reference>
<accession>Q9P6N1</accession>
<feature type="chain" id="PRO_0000050881" description="Autophagy-related protein 21">
    <location>
        <begin position="1"/>
        <end position="335"/>
    </location>
</feature>
<feature type="repeat" description="WD 1">
    <location>
        <begin position="165"/>
        <end position="205"/>
    </location>
</feature>
<feature type="repeat" description="WD 2">
    <location>
        <begin position="210"/>
        <end position="249"/>
    </location>
</feature>
<sequence length="335" mass="37108">MPSIILYCSWNQDRGFLSIGSENGYQVYRSNPFTLCFSKKANGASICEMLYESSLLAFVNISPESTRLLKLVDIKRDIVLCRIFYPSPVLSVRFTWNRLVVLIKGSIYVYNLKNMELINTLNTSKGNVIAFAVHENYVAYNSPTNPGDIYLASLDTAIPVTLIHCHSSAVQVVDFHPRGHLIATASAKGTVIRVITTSDGELVTELRRGYIPASIVSISFHPVEPFLACASENGTIHVFKISKQPSDPNSSPTSSVTVSSSWSKYLTSNVAKVWDTRKEFATAKIPEASFYGKIIFSSSGPHIQVASYSGHYYRFAVNLKNGGNCALLERYIFDD</sequence>
<name>MG179_SCHPO</name>
<protein>
    <recommendedName>
        <fullName>Autophagy-related protein 21</fullName>
    </recommendedName>
    <alternativeName>
        <fullName>Meiotically up-regulated gene 179 protein</fullName>
    </alternativeName>
</protein>
<comment type="function">
    <text evidence="1 2">Required for cytoplasm to vacuole transport (Cvt) vesicles formation and autophagy (By similarity). Has a role in sporulation.</text>
</comment>
<comment type="subcellular location">
    <subcellularLocation>
        <location>Cytoplasm</location>
    </subcellularLocation>
    <subcellularLocation>
        <location>Golgi apparatus</location>
        <location>Golgi stack membrane</location>
        <topology>Peripheral membrane protein</topology>
    </subcellularLocation>
    <subcellularLocation>
        <location>Vacuole membrane</location>
        <topology>Peripheral membrane protein</topology>
    </subcellularLocation>
    <subcellularLocation>
        <location>Preautophagosomal structure membrane</location>
        <topology>Peripheral membrane protein</topology>
    </subcellularLocation>
</comment>
<comment type="disruption phenotype">
    <text evidence="3">Impairs atg8-processing.</text>
</comment>
<comment type="similarity">
    <text evidence="4">Belongs to the WD repeat PROPPIN family.</text>
</comment>
<proteinExistence type="evidence at protein level"/>
<organism>
    <name type="scientific">Schizosaccharomyces pombe (strain 972 / ATCC 24843)</name>
    <name type="common">Fission yeast</name>
    <dbReference type="NCBI Taxonomy" id="284812"/>
    <lineage>
        <taxon>Eukaryota</taxon>
        <taxon>Fungi</taxon>
        <taxon>Dikarya</taxon>
        <taxon>Ascomycota</taxon>
        <taxon>Taphrinomycotina</taxon>
        <taxon>Schizosaccharomycetes</taxon>
        <taxon>Schizosaccharomycetales</taxon>
        <taxon>Schizosaccharomycetaceae</taxon>
        <taxon>Schizosaccharomyces</taxon>
    </lineage>
</organism>
<evidence type="ECO:0000250" key="1"/>
<evidence type="ECO:0000269" key="2">
    <source>
    </source>
</evidence>
<evidence type="ECO:0000269" key="3">
    <source>
    </source>
</evidence>
<evidence type="ECO:0000305" key="4"/>
<dbReference type="EMBL" id="CU329670">
    <property type="protein sequence ID" value="CAB90161.1"/>
    <property type="molecule type" value="Genomic_DNA"/>
</dbReference>
<dbReference type="RefSeq" id="NP_593843.1">
    <property type="nucleotide sequence ID" value="NM_001019272.2"/>
</dbReference>
<dbReference type="SMR" id="Q9P6N1"/>
<dbReference type="BioGRID" id="279722">
    <property type="interactions" value="3"/>
</dbReference>
<dbReference type="FunCoup" id="Q9P6N1">
    <property type="interactions" value="2"/>
</dbReference>
<dbReference type="STRING" id="284812.Q9P6N1"/>
<dbReference type="PaxDb" id="4896-SPAC823.16c.1"/>
<dbReference type="EnsemblFungi" id="SPAC823.16c.1">
    <property type="protein sequence ID" value="SPAC823.16c.1:pep"/>
    <property type="gene ID" value="SPAC823.16c"/>
</dbReference>
<dbReference type="GeneID" id="2543297"/>
<dbReference type="KEGG" id="spo:2543297"/>
<dbReference type="PomBase" id="SPAC823.16c"/>
<dbReference type="VEuPathDB" id="FungiDB:SPAC823.16c"/>
<dbReference type="eggNOG" id="KOG2110">
    <property type="taxonomic scope" value="Eukaryota"/>
</dbReference>
<dbReference type="HOGENOM" id="CLU_826814_0_0_1"/>
<dbReference type="InParanoid" id="Q9P6N1"/>
<dbReference type="OMA" id="DYFSSEW"/>
<dbReference type="PhylomeDB" id="Q9P6N1"/>
<dbReference type="Reactome" id="R-SPO-1632852">
    <property type="pathway name" value="Macroautophagy"/>
</dbReference>
<dbReference type="PRO" id="PR:Q9P6N1"/>
<dbReference type="Proteomes" id="UP000002485">
    <property type="component" value="Chromosome I"/>
</dbReference>
<dbReference type="GO" id="GO:0005829">
    <property type="term" value="C:cytosol"/>
    <property type="evidence" value="ECO:0000318"/>
    <property type="project" value="GO_Central"/>
</dbReference>
<dbReference type="GO" id="GO:0000329">
    <property type="term" value="C:fungal-type vacuole membrane"/>
    <property type="evidence" value="ECO:0000318"/>
    <property type="project" value="GO_Central"/>
</dbReference>
<dbReference type="GO" id="GO:0005794">
    <property type="term" value="C:Golgi apparatus"/>
    <property type="evidence" value="ECO:0007005"/>
    <property type="project" value="PomBase"/>
</dbReference>
<dbReference type="GO" id="GO:0032580">
    <property type="term" value="C:Golgi cisterna membrane"/>
    <property type="evidence" value="ECO:0007669"/>
    <property type="project" value="UniProtKB-SubCell"/>
</dbReference>
<dbReference type="GO" id="GO:0000407">
    <property type="term" value="C:phagophore assembly site"/>
    <property type="evidence" value="ECO:0000314"/>
    <property type="project" value="PomBase"/>
</dbReference>
<dbReference type="GO" id="GO:0034045">
    <property type="term" value="C:phagophore assembly site membrane"/>
    <property type="evidence" value="ECO:0000318"/>
    <property type="project" value="GO_Central"/>
</dbReference>
<dbReference type="GO" id="GO:0080025">
    <property type="term" value="F:phosphatidylinositol-3,5-bisphosphate binding"/>
    <property type="evidence" value="ECO:0000318"/>
    <property type="project" value="GO_Central"/>
</dbReference>
<dbReference type="GO" id="GO:0032266">
    <property type="term" value="F:phosphatidylinositol-3-phosphate binding"/>
    <property type="evidence" value="ECO:0000318"/>
    <property type="project" value="GO_Central"/>
</dbReference>
<dbReference type="GO" id="GO:0030674">
    <property type="term" value="F:protein-macromolecule adaptor activity"/>
    <property type="evidence" value="ECO:0000318"/>
    <property type="project" value="GO_Central"/>
</dbReference>
<dbReference type="GO" id="GO:0000422">
    <property type="term" value="P:autophagy of mitochondrion"/>
    <property type="evidence" value="ECO:0000318"/>
    <property type="project" value="GO_Central"/>
</dbReference>
<dbReference type="GO" id="GO:0061723">
    <property type="term" value="P:glycophagy"/>
    <property type="evidence" value="ECO:0000318"/>
    <property type="project" value="GO_Central"/>
</dbReference>
<dbReference type="GO" id="GO:0016236">
    <property type="term" value="P:macroautophagy"/>
    <property type="evidence" value="ECO:0000315"/>
    <property type="project" value="PomBase"/>
</dbReference>
<dbReference type="GO" id="GO:0044804">
    <property type="term" value="P:nucleophagy"/>
    <property type="evidence" value="ECO:0000318"/>
    <property type="project" value="GO_Central"/>
</dbReference>
<dbReference type="GO" id="GO:0000425">
    <property type="term" value="P:pexophagy"/>
    <property type="evidence" value="ECO:0000318"/>
    <property type="project" value="GO_Central"/>
</dbReference>
<dbReference type="GO" id="GO:0034497">
    <property type="term" value="P:protein localization to phagophore assembly site"/>
    <property type="evidence" value="ECO:0000318"/>
    <property type="project" value="GO_Central"/>
</dbReference>
<dbReference type="GO" id="GO:0015031">
    <property type="term" value="P:protein transport"/>
    <property type="evidence" value="ECO:0007669"/>
    <property type="project" value="UniProtKB-KW"/>
</dbReference>
<dbReference type="GO" id="GO:0030435">
    <property type="term" value="P:sporulation resulting in formation of a cellular spore"/>
    <property type="evidence" value="ECO:0007669"/>
    <property type="project" value="UniProtKB-KW"/>
</dbReference>
<dbReference type="Gene3D" id="2.130.10.10">
    <property type="entry name" value="YVTN repeat-like/Quinoprotein amine dehydrogenase"/>
    <property type="match status" value="1"/>
</dbReference>
<dbReference type="InterPro" id="IPR048720">
    <property type="entry name" value="PROPPIN"/>
</dbReference>
<dbReference type="InterPro" id="IPR015943">
    <property type="entry name" value="WD40/YVTN_repeat-like_dom_sf"/>
</dbReference>
<dbReference type="InterPro" id="IPR036322">
    <property type="entry name" value="WD40_repeat_dom_sf"/>
</dbReference>
<dbReference type="InterPro" id="IPR001680">
    <property type="entry name" value="WD40_rpt"/>
</dbReference>
<dbReference type="PANTHER" id="PTHR11227">
    <property type="entry name" value="WD-REPEAT PROTEIN INTERACTING WITH PHOSPHOINOSIDES WIPI -RELATED"/>
    <property type="match status" value="1"/>
</dbReference>
<dbReference type="Pfam" id="PF21032">
    <property type="entry name" value="PROPPIN"/>
    <property type="match status" value="1"/>
</dbReference>
<dbReference type="SMART" id="SM00320">
    <property type="entry name" value="WD40"/>
    <property type="match status" value="2"/>
</dbReference>
<dbReference type="SUPFAM" id="SSF50978">
    <property type="entry name" value="WD40 repeat-like"/>
    <property type="match status" value="2"/>
</dbReference>
<keyword id="KW-0072">Autophagy</keyword>
<keyword id="KW-0963">Cytoplasm</keyword>
<keyword id="KW-0333">Golgi apparatus</keyword>
<keyword id="KW-0472">Membrane</keyword>
<keyword id="KW-0653">Protein transport</keyword>
<keyword id="KW-1185">Reference proteome</keyword>
<keyword id="KW-0677">Repeat</keyword>
<keyword id="KW-0749">Sporulation</keyword>
<keyword id="KW-0813">Transport</keyword>
<keyword id="KW-0926">Vacuole</keyword>
<keyword id="KW-0853">WD repeat</keyword>